<gene>
    <name evidence="1" type="primary">rpsS</name>
    <name type="ordered locus">BT_2723</name>
</gene>
<dbReference type="EMBL" id="AE015928">
    <property type="protein sequence ID" value="AAO77829.1"/>
    <property type="molecule type" value="Genomic_DNA"/>
</dbReference>
<dbReference type="RefSeq" id="NP_811635.1">
    <property type="nucleotide sequence ID" value="NC_004663.1"/>
</dbReference>
<dbReference type="RefSeq" id="WP_008762037.1">
    <property type="nucleotide sequence ID" value="NZ_UYXG01000001.1"/>
</dbReference>
<dbReference type="SMR" id="Q8A480"/>
<dbReference type="FunCoup" id="Q8A480">
    <property type="interactions" value="520"/>
</dbReference>
<dbReference type="STRING" id="226186.BT_2723"/>
<dbReference type="PaxDb" id="226186-BT_2723"/>
<dbReference type="EnsemblBacteria" id="AAO77829">
    <property type="protein sequence ID" value="AAO77829"/>
    <property type="gene ID" value="BT_2723"/>
</dbReference>
<dbReference type="GeneID" id="82176355"/>
<dbReference type="KEGG" id="bth:BT_2723"/>
<dbReference type="PATRIC" id="fig|226186.12.peg.2766"/>
<dbReference type="eggNOG" id="COG0185">
    <property type="taxonomic scope" value="Bacteria"/>
</dbReference>
<dbReference type="HOGENOM" id="CLU_144911_0_1_10"/>
<dbReference type="InParanoid" id="Q8A480"/>
<dbReference type="OrthoDB" id="9797833at2"/>
<dbReference type="Proteomes" id="UP000001414">
    <property type="component" value="Chromosome"/>
</dbReference>
<dbReference type="GO" id="GO:0005737">
    <property type="term" value="C:cytoplasm"/>
    <property type="evidence" value="ECO:0007669"/>
    <property type="project" value="UniProtKB-ARBA"/>
</dbReference>
<dbReference type="GO" id="GO:0015935">
    <property type="term" value="C:small ribosomal subunit"/>
    <property type="evidence" value="ECO:0007669"/>
    <property type="project" value="InterPro"/>
</dbReference>
<dbReference type="GO" id="GO:0019843">
    <property type="term" value="F:rRNA binding"/>
    <property type="evidence" value="ECO:0007669"/>
    <property type="project" value="UniProtKB-UniRule"/>
</dbReference>
<dbReference type="GO" id="GO:0003735">
    <property type="term" value="F:structural constituent of ribosome"/>
    <property type="evidence" value="ECO:0000318"/>
    <property type="project" value="GO_Central"/>
</dbReference>
<dbReference type="GO" id="GO:0000028">
    <property type="term" value="P:ribosomal small subunit assembly"/>
    <property type="evidence" value="ECO:0000318"/>
    <property type="project" value="GO_Central"/>
</dbReference>
<dbReference type="GO" id="GO:0006412">
    <property type="term" value="P:translation"/>
    <property type="evidence" value="ECO:0007669"/>
    <property type="project" value="UniProtKB-UniRule"/>
</dbReference>
<dbReference type="FunFam" id="3.30.860.10:FF:000001">
    <property type="entry name" value="30S ribosomal protein S19"/>
    <property type="match status" value="1"/>
</dbReference>
<dbReference type="Gene3D" id="3.30.860.10">
    <property type="entry name" value="30s Ribosomal Protein S19, Chain A"/>
    <property type="match status" value="1"/>
</dbReference>
<dbReference type="HAMAP" id="MF_00531">
    <property type="entry name" value="Ribosomal_uS19"/>
    <property type="match status" value="1"/>
</dbReference>
<dbReference type="InterPro" id="IPR002222">
    <property type="entry name" value="Ribosomal_uS19"/>
</dbReference>
<dbReference type="InterPro" id="IPR005732">
    <property type="entry name" value="Ribosomal_uS19_bac-type"/>
</dbReference>
<dbReference type="InterPro" id="IPR020934">
    <property type="entry name" value="Ribosomal_uS19_CS"/>
</dbReference>
<dbReference type="InterPro" id="IPR023575">
    <property type="entry name" value="Ribosomal_uS19_SF"/>
</dbReference>
<dbReference type="NCBIfam" id="TIGR01050">
    <property type="entry name" value="rpsS_bact"/>
    <property type="match status" value="1"/>
</dbReference>
<dbReference type="PANTHER" id="PTHR11880">
    <property type="entry name" value="RIBOSOMAL PROTEIN S19P FAMILY MEMBER"/>
    <property type="match status" value="1"/>
</dbReference>
<dbReference type="PANTHER" id="PTHR11880:SF8">
    <property type="entry name" value="SMALL RIBOSOMAL SUBUNIT PROTEIN US19M"/>
    <property type="match status" value="1"/>
</dbReference>
<dbReference type="Pfam" id="PF00203">
    <property type="entry name" value="Ribosomal_S19"/>
    <property type="match status" value="1"/>
</dbReference>
<dbReference type="PIRSF" id="PIRSF002144">
    <property type="entry name" value="Ribosomal_S19"/>
    <property type="match status" value="1"/>
</dbReference>
<dbReference type="PRINTS" id="PR00975">
    <property type="entry name" value="RIBOSOMALS19"/>
</dbReference>
<dbReference type="SUPFAM" id="SSF54570">
    <property type="entry name" value="Ribosomal protein S19"/>
    <property type="match status" value="1"/>
</dbReference>
<dbReference type="PROSITE" id="PS00323">
    <property type="entry name" value="RIBOSOMAL_S19"/>
    <property type="match status" value="1"/>
</dbReference>
<keyword id="KW-1185">Reference proteome</keyword>
<keyword id="KW-0687">Ribonucleoprotein</keyword>
<keyword id="KW-0689">Ribosomal protein</keyword>
<keyword id="KW-0694">RNA-binding</keyword>
<keyword id="KW-0699">rRNA-binding</keyword>
<name>RS19_BACTN</name>
<evidence type="ECO:0000255" key="1">
    <source>
        <dbReference type="HAMAP-Rule" id="MF_00531"/>
    </source>
</evidence>
<evidence type="ECO:0000305" key="2"/>
<sequence>MSRSLKKGPYINVKLEKRIFAMNESGKKVVVKTWARASMISPDFVGHTVAVHNGNKFIPVYVTENMVGHKLGEFAPTRTFRGHAGNKKR</sequence>
<organism>
    <name type="scientific">Bacteroides thetaiotaomicron (strain ATCC 29148 / DSM 2079 / JCM 5827 / CCUG 10774 / NCTC 10582 / VPI-5482 / E50)</name>
    <dbReference type="NCBI Taxonomy" id="226186"/>
    <lineage>
        <taxon>Bacteria</taxon>
        <taxon>Pseudomonadati</taxon>
        <taxon>Bacteroidota</taxon>
        <taxon>Bacteroidia</taxon>
        <taxon>Bacteroidales</taxon>
        <taxon>Bacteroidaceae</taxon>
        <taxon>Bacteroides</taxon>
    </lineage>
</organism>
<comment type="function">
    <text evidence="1">Protein S19 forms a complex with S13 that binds strongly to the 16S ribosomal RNA.</text>
</comment>
<comment type="similarity">
    <text evidence="1">Belongs to the universal ribosomal protein uS19 family.</text>
</comment>
<accession>Q8A480</accession>
<proteinExistence type="inferred from homology"/>
<feature type="chain" id="PRO_0000129781" description="Small ribosomal subunit protein uS19">
    <location>
        <begin position="1"/>
        <end position="89"/>
    </location>
</feature>
<protein>
    <recommendedName>
        <fullName evidence="1">Small ribosomal subunit protein uS19</fullName>
    </recommendedName>
    <alternativeName>
        <fullName evidence="2">30S ribosomal protein S19</fullName>
    </alternativeName>
</protein>
<reference key="1">
    <citation type="journal article" date="2003" name="Science">
        <title>A genomic view of the human-Bacteroides thetaiotaomicron symbiosis.</title>
        <authorList>
            <person name="Xu J."/>
            <person name="Bjursell M.K."/>
            <person name="Himrod J."/>
            <person name="Deng S."/>
            <person name="Carmichael L.K."/>
            <person name="Chiang H.C."/>
            <person name="Hooper L.V."/>
            <person name="Gordon J.I."/>
        </authorList>
    </citation>
    <scope>NUCLEOTIDE SEQUENCE [LARGE SCALE GENOMIC DNA]</scope>
    <source>
        <strain>ATCC 29148 / DSM 2079 / JCM 5827 / CCUG 10774 / NCTC 10582 / VPI-5482 / E50</strain>
    </source>
</reference>